<reference key="1">
    <citation type="journal article" date="2004" name="Biochem. J.">
        <title>Cloning and expression of an inhibitor of microbial metalloproteinases from insects contributing to innate immunity.</title>
        <authorList>
            <person name="Clermont A."/>
            <person name="Wedde M."/>
            <person name="Seitz V."/>
            <person name="Podsiadlowski L."/>
            <person name="Lenze D."/>
            <person name="Hummel M."/>
            <person name="Vilcinskas A."/>
        </authorList>
    </citation>
    <scope>NUCLEOTIDE SEQUENCE [MRNA]</scope>
    <scope>FUNCTION</scope>
    <scope>INDUCTION</scope>
</reference>
<reference key="2">
    <citation type="submission" date="2003-07" db="EMBL/GenBank/DDBJ databases">
        <title>Hemolymph proteins of the greater wax moth, Galleria mellonella.</title>
        <authorList>
            <person name="Weise C."/>
            <person name="Bender O."/>
            <person name="Kopacek P."/>
            <person name="Hucho F."/>
        </authorList>
    </citation>
    <scope>NUCLEOTIDE SEQUENCE [MRNA]</scope>
</reference>
<reference key="3">
    <citation type="journal article" date="1998" name="Eur. J. Biochem.">
        <title>Purification and characterization of an inducible metalloprotease inhibitor from the hemolymph of greater wax moth larvae, Galleria mellonella.</title>
        <authorList>
            <person name="Wedde M."/>
            <person name="Weise C."/>
            <person name="Kopacek P."/>
            <person name="Franke P."/>
            <person name="Vilcinskas A."/>
        </authorList>
    </citation>
    <scope>PROTEIN SEQUENCE OF 57-82</scope>
    <scope>FUNCTION</scope>
    <scope>INDUCTION</scope>
    <scope>BLOCKAGE OF N-TERMINUS</scope>
    <scope>GLYCOSYLATION AT ASN-48</scope>
    <source>
        <tissue>Larval hemolymph</tissue>
    </source>
</reference>
<reference key="4">
    <citation type="submission" date="2003-07" db="UniProtKB">
        <authorList>
            <person name="Weise C."/>
        </authorList>
    </citation>
    <scope>SEQUENCE REVISION TO 63</scope>
    <scope>MASS SPECTROMETRY</scope>
</reference>
<reference evidence="6" key="5">
    <citation type="journal article" date="2021" name="Molecules">
        <title>Fungal alpha-1,3-Glucan as a New Pathogen-Associated Molecular Pattern in the Insect Model Host Galleria mellonella.</title>
        <authorList>
            <person name="Staczek S."/>
            <person name="Zdybicka-Barabas A."/>
            <person name="Wojda I."/>
            <person name="Wiater A."/>
            <person name="Mak P."/>
            <person name="Suder P."/>
            <person name="Skrzypiec K."/>
            <person name="Cytrynska M."/>
        </authorList>
    </citation>
    <scope>DEVELOPMENTAL STAGE</scope>
    <scope>INDUCTION BY A.NIGER ALPHA-1,3-GLUCAN</scope>
</reference>
<protein>
    <recommendedName>
        <fullName>Inducible metalloproteinase inhibitor protein</fullName>
    </recommendedName>
    <component>
        <recommendedName>
            <fullName>IMPI alpha</fullName>
        </recommendedName>
    </component>
</protein>
<proteinExistence type="evidence at protein level"/>
<sequence>MKCLLYLCLWCYCVLVSSSIVLICNGGHEYYECGGACDNVCADLHIQNKTNCPIINIRCNDKCYCEDGYARDVNGKCIPIKDCPKIRSRRSIGIPVDKKCCTGPNEHYDEEKVSCPPETCISLVAKFSCIDSPPPSPGCSCNSGYLRLNLTSPCIPICDCPQMQHSPDCQ</sequence>
<organism>
    <name type="scientific">Galleria mellonella</name>
    <name type="common">Greater wax moth</name>
    <dbReference type="NCBI Taxonomy" id="7137"/>
    <lineage>
        <taxon>Eukaryota</taxon>
        <taxon>Metazoa</taxon>
        <taxon>Ecdysozoa</taxon>
        <taxon>Arthropoda</taxon>
        <taxon>Hexapoda</taxon>
        <taxon>Insecta</taxon>
        <taxon>Pterygota</taxon>
        <taxon>Neoptera</taxon>
        <taxon>Endopterygota</taxon>
        <taxon>Lepidoptera</taxon>
        <taxon>Glossata</taxon>
        <taxon>Ditrysia</taxon>
        <taxon>Pyraloidea</taxon>
        <taxon>Pyralidae</taxon>
        <taxon>Galleriinae</taxon>
        <taxon>Galleria</taxon>
    </lineage>
</organism>
<name>IMPI_GALME</name>
<comment type="function">
    <text evidence="2 4">Inhibits thermolysin, bacillolysin and pseudolysin, B.polymyxa metalloprotease and human MMP1 and MMP3. No activity on trypsin or cysteine protease papain.</text>
</comment>
<comment type="developmental stage">
    <text evidence="3">Expressed in fat body of last instar larvae.</text>
</comment>
<comment type="induction">
    <text evidence="2 3 4">During humoral immune response (PubMed:9738891). By lipopolysaccharide (LPS) (PubMed:15115439). Induced by A.niger alpha-1,3-glucan (PubMed:34443685).</text>
</comment>
<comment type="PTM">
    <text evidence="6">Cleaved.</text>
</comment>
<comment type="PTM">
    <text>Five disulfide bonds are present. When artificially cleaved by thermolysin between Asn-56 and Ile-57, the two obtained chains (called heavy and light chains) remain linked.</text>
</comment>
<comment type="PTM">
    <text>The N-terminus is blocked.</text>
</comment>
<comment type="mass spectrometry">
    <molecule>IMPI alpha</molecule>
</comment>
<keyword id="KW-0002">3D-structure</keyword>
<keyword id="KW-0903">Direct protein sequencing</keyword>
<keyword id="KW-1015">Disulfide bond</keyword>
<keyword id="KW-0325">Glycoprotein</keyword>
<keyword id="KW-0481">Metalloenzyme inhibitor</keyword>
<keyword id="KW-0483">Metalloprotease inhibitor</keyword>
<keyword id="KW-0646">Protease inhibitor</keyword>
<keyword id="KW-1185">Reference proteome</keyword>
<keyword id="KW-0732">Signal</keyword>
<dbReference type="EMBL" id="AY330624">
    <property type="protein sequence ID" value="AAQ73240.1"/>
    <property type="molecule type" value="mRNA"/>
</dbReference>
<dbReference type="EMBL" id="AJ577749">
    <property type="protein sequence ID" value="CAE12200.1"/>
    <property type="molecule type" value="mRNA"/>
</dbReference>
<dbReference type="PDB" id="3SSB">
    <property type="method" value="X-ray"/>
    <property type="resolution" value="1.80 A"/>
    <property type="chains" value="C/D=19-56, I/J=57-88"/>
</dbReference>
<dbReference type="PDBsum" id="3SSB"/>
<dbReference type="SMR" id="P82176"/>
<dbReference type="MEROPS" id="I08.006"/>
<dbReference type="GlyCosmos" id="P82176">
    <property type="glycosylation" value="2 sites, No reported glycans"/>
</dbReference>
<dbReference type="iPTMnet" id="P82176"/>
<dbReference type="InParanoid" id="P82176"/>
<dbReference type="EvolutionaryTrace" id="P82176"/>
<dbReference type="Proteomes" id="UP000504614">
    <property type="component" value="Unplaced"/>
</dbReference>
<dbReference type="GO" id="GO:0005615">
    <property type="term" value="C:extracellular space"/>
    <property type="evidence" value="ECO:0000314"/>
    <property type="project" value="UniProtKB"/>
</dbReference>
<dbReference type="GO" id="GO:0008191">
    <property type="term" value="F:metalloendopeptidase inhibitor activity"/>
    <property type="evidence" value="ECO:0000314"/>
    <property type="project" value="UniProtKB"/>
</dbReference>
<dbReference type="GO" id="GO:0009653">
    <property type="term" value="P:anatomical structure morphogenesis"/>
    <property type="evidence" value="ECO:0000303"/>
    <property type="project" value="UniProtKB"/>
</dbReference>
<dbReference type="GO" id="GO:0030198">
    <property type="term" value="P:extracellular matrix organization"/>
    <property type="evidence" value="ECO:0000303"/>
    <property type="project" value="UniProtKB"/>
</dbReference>
<dbReference type="GO" id="GO:0042060">
    <property type="term" value="P:wound healing"/>
    <property type="evidence" value="ECO:0000303"/>
    <property type="project" value="UniProtKB"/>
</dbReference>
<dbReference type="CDD" id="cd19941">
    <property type="entry name" value="TIL"/>
    <property type="match status" value="1"/>
</dbReference>
<dbReference type="FunFam" id="2.10.25.10:FF:000674">
    <property type="entry name" value="Mucin-2"/>
    <property type="match status" value="2"/>
</dbReference>
<dbReference type="Gene3D" id="2.10.25.10">
    <property type="entry name" value="Laminin"/>
    <property type="match status" value="2"/>
</dbReference>
<dbReference type="InterPro" id="IPR036084">
    <property type="entry name" value="Ser_inhib-like_sf"/>
</dbReference>
<dbReference type="InterPro" id="IPR051368">
    <property type="entry name" value="SerProtInhib-TIL_Domain"/>
</dbReference>
<dbReference type="InterPro" id="IPR002919">
    <property type="entry name" value="TIL_dom"/>
</dbReference>
<dbReference type="PANTHER" id="PTHR23259:SF70">
    <property type="entry name" value="ACCESSORY GLAND PROTEIN ACP62F-RELATED"/>
    <property type="match status" value="1"/>
</dbReference>
<dbReference type="PANTHER" id="PTHR23259">
    <property type="entry name" value="RIDDLE"/>
    <property type="match status" value="1"/>
</dbReference>
<dbReference type="Pfam" id="PF01826">
    <property type="entry name" value="TIL"/>
    <property type="match status" value="1"/>
</dbReference>
<dbReference type="SUPFAM" id="SSF57567">
    <property type="entry name" value="Serine protease inhibitors"/>
    <property type="match status" value="1"/>
</dbReference>
<evidence type="ECO:0000255" key="1"/>
<evidence type="ECO:0000269" key="2">
    <source>
    </source>
</evidence>
<evidence type="ECO:0000269" key="3">
    <source>
    </source>
</evidence>
<evidence type="ECO:0000269" key="4">
    <source>
    </source>
</evidence>
<evidence type="ECO:0000269" key="5">
    <source ref="4"/>
</evidence>
<evidence type="ECO:0000305" key="6"/>
<evidence type="ECO:0007829" key="7">
    <source>
        <dbReference type="PDB" id="3SSB"/>
    </source>
</evidence>
<feature type="signal peptide" evidence="1">
    <location>
        <begin position="1"/>
        <end position="19"/>
    </location>
</feature>
<feature type="chain" id="PRO_0000021511" description="Inducible metalloproteinase inhibitor protein">
    <location>
        <begin position="20"/>
        <end position="170"/>
    </location>
</feature>
<feature type="chain" id="PRO_0000021512" description="IMPI alpha">
    <location>
        <begin position="20"/>
        <end position="88"/>
    </location>
</feature>
<feature type="site" description="Cleavage" evidence="6">
    <location>
        <begin position="88"/>
        <end position="89"/>
    </location>
</feature>
<feature type="glycosylation site" description="N-linked (GlcNAc...) asparagine" evidence="4">
    <location>
        <position position="48"/>
    </location>
</feature>
<feature type="glycosylation site" description="N-linked (GlcNAc...) asparagine" evidence="1">
    <location>
        <position position="149"/>
    </location>
</feature>
<feature type="strand" evidence="7">
    <location>
        <begin position="26"/>
        <end position="34"/>
    </location>
</feature>
<feature type="helix" evidence="7">
    <location>
        <begin position="41"/>
        <end position="43"/>
    </location>
</feature>
<feature type="turn" evidence="7">
    <location>
        <begin position="44"/>
        <end position="46"/>
    </location>
</feature>
<feature type="strand" evidence="7">
    <location>
        <begin position="49"/>
        <end position="51"/>
    </location>
</feature>
<feature type="strand" evidence="7">
    <location>
        <begin position="60"/>
        <end position="65"/>
    </location>
</feature>
<feature type="strand" evidence="7">
    <location>
        <begin position="69"/>
        <end position="71"/>
    </location>
</feature>
<feature type="strand" evidence="7">
    <location>
        <begin position="77"/>
        <end position="79"/>
    </location>
</feature>
<feature type="helix" evidence="7">
    <location>
        <begin position="80"/>
        <end position="82"/>
    </location>
</feature>
<accession>P82176</accession>
<accession>Q67FQ9</accession>
<gene>
    <name type="primary">IMPI</name>
</gene>